<sequence length="451" mass="49845">SVGFKAGVKDYRLTYYTPDYETKDTDILAAFRVTPQPGVPAEEAGAAVAAESSTGTWTTVWTDGLTSLDRYKGRCYHIEAVVGEENQYIAYVAYPLDLFEEGSVTNMFTSIVGNVFGFKALRALRLEDLRIPPSYSKTFQGPPHGIQVERDKLNKYGRPLLGCTIKPKLGLSAKNYGRAVYECLRGGLDFTKDDENVNSQPFMRWRDRFLFCAEAIYKAQAETGEIKGHYLNATAGTCEEMIKRAVFARELGVPIVMHDYLTGGFTANTSLAHYCRDNGLLLHIHRAMHAVIDRQKNHGMHFRVLAKALRMSGGDHIHAGTVVGKLEGEREMTLGFVDLLRDDYIEKDRSRGIFFTQDWVSMPGVLPVASGGIHVWHMPALTEIFGDDSVLQFGGGTLGHPWGNAPGAVANRVALEACVQARNEGRDLAREGNEIIPEACNWSPELAAACE</sequence>
<proteinExistence type="inferred from homology"/>
<feature type="chain" id="PRO_0000062361" description="Ribulose bisphosphate carboxylase large chain">
    <location>
        <begin position="1" status="less than"/>
        <end position="451" status="greater than"/>
    </location>
</feature>
<feature type="active site" description="Proton acceptor" evidence="1">
    <location>
        <position position="166"/>
    </location>
</feature>
<feature type="active site" description="Proton acceptor" evidence="1">
    <location>
        <position position="285"/>
    </location>
</feature>
<feature type="binding site" description="in homodimeric partner" evidence="1">
    <location>
        <position position="114"/>
    </location>
    <ligand>
        <name>substrate</name>
    </ligand>
</feature>
<feature type="binding site" evidence="1">
    <location>
        <position position="164"/>
    </location>
    <ligand>
        <name>substrate</name>
    </ligand>
</feature>
<feature type="binding site" evidence="1">
    <location>
        <position position="168"/>
    </location>
    <ligand>
        <name>substrate</name>
    </ligand>
</feature>
<feature type="binding site" description="via carbamate group" evidence="1">
    <location>
        <position position="192"/>
    </location>
    <ligand>
        <name>Mg(2+)</name>
        <dbReference type="ChEBI" id="CHEBI:18420"/>
    </ligand>
</feature>
<feature type="binding site" evidence="1">
    <location>
        <position position="194"/>
    </location>
    <ligand>
        <name>Mg(2+)</name>
        <dbReference type="ChEBI" id="CHEBI:18420"/>
    </ligand>
</feature>
<feature type="binding site" evidence="1">
    <location>
        <position position="195"/>
    </location>
    <ligand>
        <name>Mg(2+)</name>
        <dbReference type="ChEBI" id="CHEBI:18420"/>
    </ligand>
</feature>
<feature type="binding site" evidence="1">
    <location>
        <position position="286"/>
    </location>
    <ligand>
        <name>substrate</name>
    </ligand>
</feature>
<feature type="binding site" evidence="1">
    <location>
        <position position="318"/>
    </location>
    <ligand>
        <name>substrate</name>
    </ligand>
</feature>
<feature type="binding site" evidence="1">
    <location>
        <position position="370"/>
    </location>
    <ligand>
        <name>substrate</name>
    </ligand>
</feature>
<feature type="site" description="Transition state stabilizer" evidence="1">
    <location>
        <position position="325"/>
    </location>
</feature>
<feature type="modified residue" description="N6,N6,N6-trimethyllysine" evidence="1">
    <location>
        <position position="5"/>
    </location>
</feature>
<feature type="modified residue" description="N6-carboxylysine" evidence="1">
    <location>
        <position position="192"/>
    </location>
</feature>
<feature type="disulfide bond" description="Interchain; in linked form" evidence="1">
    <location>
        <position position="238"/>
    </location>
</feature>
<feature type="non-terminal residue">
    <location>
        <position position="1"/>
    </location>
</feature>
<feature type="non-terminal residue">
    <location>
        <position position="451"/>
    </location>
</feature>
<keyword id="KW-0113">Calvin cycle</keyword>
<keyword id="KW-0120">Carbon dioxide fixation</keyword>
<keyword id="KW-0150">Chloroplast</keyword>
<keyword id="KW-1015">Disulfide bond</keyword>
<keyword id="KW-0456">Lyase</keyword>
<keyword id="KW-0460">Magnesium</keyword>
<keyword id="KW-0479">Metal-binding</keyword>
<keyword id="KW-0488">Methylation</keyword>
<keyword id="KW-0503">Monooxygenase</keyword>
<keyword id="KW-0560">Oxidoreductase</keyword>
<keyword id="KW-0601">Photorespiration</keyword>
<keyword id="KW-0602">Photosynthesis</keyword>
<keyword id="KW-0934">Plastid</keyword>
<name>RBL_ARIGL</name>
<reference key="1">
    <citation type="submission" date="1996-07" db="EMBL/GenBank/DDBJ databases">
        <authorList>
            <person name="Rudall P.J."/>
            <person name="Furness C.A."/>
            <person name="Fay M.F."/>
            <person name="Chase M.W."/>
        </authorList>
    </citation>
    <scope>NUCLEOTIDE SEQUENCE [GENOMIC DNA]</scope>
    <source>
        <tissue>Leaf</tissue>
    </source>
</reference>
<organism>
    <name type="scientific">Aristea glauca</name>
    <dbReference type="NCBI Taxonomy" id="61253"/>
    <lineage>
        <taxon>Eukaryota</taxon>
        <taxon>Viridiplantae</taxon>
        <taxon>Streptophyta</taxon>
        <taxon>Embryophyta</taxon>
        <taxon>Tracheophyta</taxon>
        <taxon>Spermatophyta</taxon>
        <taxon>Magnoliopsida</taxon>
        <taxon>Liliopsida</taxon>
        <taxon>Asparagales</taxon>
        <taxon>Iridaceae</taxon>
        <taxon>Aristeoideae</taxon>
        <taxon>Aristea</taxon>
    </lineage>
</organism>
<accession>P93890</accession>
<protein>
    <recommendedName>
        <fullName evidence="1">Ribulose bisphosphate carboxylase large chain</fullName>
        <shortName evidence="1">RuBisCO large subunit</shortName>
        <ecNumber evidence="1">4.1.1.39</ecNumber>
    </recommendedName>
</protein>
<geneLocation type="chloroplast"/>
<comment type="function">
    <text evidence="1">RuBisCO catalyzes two reactions: the carboxylation of D-ribulose 1,5-bisphosphate, the primary event in carbon dioxide fixation, as well as the oxidative fragmentation of the pentose substrate in the photorespiration process. Both reactions occur simultaneously and in competition at the same active site.</text>
</comment>
<comment type="catalytic activity">
    <reaction evidence="1">
        <text>2 (2R)-3-phosphoglycerate + 2 H(+) = D-ribulose 1,5-bisphosphate + CO2 + H2O</text>
        <dbReference type="Rhea" id="RHEA:23124"/>
        <dbReference type="ChEBI" id="CHEBI:15377"/>
        <dbReference type="ChEBI" id="CHEBI:15378"/>
        <dbReference type="ChEBI" id="CHEBI:16526"/>
        <dbReference type="ChEBI" id="CHEBI:57870"/>
        <dbReference type="ChEBI" id="CHEBI:58272"/>
        <dbReference type="EC" id="4.1.1.39"/>
    </reaction>
</comment>
<comment type="catalytic activity">
    <reaction evidence="1">
        <text>D-ribulose 1,5-bisphosphate + O2 = 2-phosphoglycolate + (2R)-3-phosphoglycerate + 2 H(+)</text>
        <dbReference type="Rhea" id="RHEA:36631"/>
        <dbReference type="ChEBI" id="CHEBI:15378"/>
        <dbReference type="ChEBI" id="CHEBI:15379"/>
        <dbReference type="ChEBI" id="CHEBI:57870"/>
        <dbReference type="ChEBI" id="CHEBI:58033"/>
        <dbReference type="ChEBI" id="CHEBI:58272"/>
    </reaction>
</comment>
<comment type="cofactor">
    <cofactor evidence="1">
        <name>Mg(2+)</name>
        <dbReference type="ChEBI" id="CHEBI:18420"/>
    </cofactor>
    <text evidence="1">Binds 1 Mg(2+) ion per subunit.</text>
</comment>
<comment type="subunit">
    <text evidence="1">Heterohexadecamer of 8 large chains and 8 small chains; disulfide-linked. The disulfide link is formed within the large subunit homodimers.</text>
</comment>
<comment type="subcellular location">
    <subcellularLocation>
        <location>Plastid</location>
        <location>Chloroplast</location>
    </subcellularLocation>
</comment>
<comment type="PTM">
    <text evidence="1">The disulfide bond which can form in the large chain dimeric partners within the hexadecamer appears to be associated with oxidative stress and protein turnover.</text>
</comment>
<comment type="miscellaneous">
    <text evidence="1">The basic functional RuBisCO is composed of a large chain homodimer in a 'head-to-tail' conformation. In form I RuBisCO this homodimer is arranged in a barrel-like tetramer with the small subunits forming a tetrameric 'cap' on each end of the 'barrel'.</text>
</comment>
<comment type="similarity">
    <text evidence="1">Belongs to the RuBisCO large chain family. Type I subfamily.</text>
</comment>
<evidence type="ECO:0000255" key="1">
    <source>
        <dbReference type="HAMAP-Rule" id="MF_01338"/>
    </source>
</evidence>
<gene>
    <name evidence="1" type="primary">rbcL</name>
</gene>
<dbReference type="EC" id="4.1.1.39" evidence="1"/>
<dbReference type="EMBL" id="Z77282">
    <property type="protein sequence ID" value="CAB01082.1"/>
    <property type="molecule type" value="Genomic_DNA"/>
</dbReference>
<dbReference type="SMR" id="P93890"/>
<dbReference type="GO" id="GO:0009507">
    <property type="term" value="C:chloroplast"/>
    <property type="evidence" value="ECO:0007669"/>
    <property type="project" value="UniProtKB-SubCell"/>
</dbReference>
<dbReference type="GO" id="GO:0000287">
    <property type="term" value="F:magnesium ion binding"/>
    <property type="evidence" value="ECO:0007669"/>
    <property type="project" value="InterPro"/>
</dbReference>
<dbReference type="GO" id="GO:0004497">
    <property type="term" value="F:monooxygenase activity"/>
    <property type="evidence" value="ECO:0007669"/>
    <property type="project" value="UniProtKB-KW"/>
</dbReference>
<dbReference type="GO" id="GO:0016984">
    <property type="term" value="F:ribulose-bisphosphate carboxylase activity"/>
    <property type="evidence" value="ECO:0007669"/>
    <property type="project" value="UniProtKB-EC"/>
</dbReference>
<dbReference type="GO" id="GO:0009853">
    <property type="term" value="P:photorespiration"/>
    <property type="evidence" value="ECO:0007669"/>
    <property type="project" value="UniProtKB-KW"/>
</dbReference>
<dbReference type="GO" id="GO:0019253">
    <property type="term" value="P:reductive pentose-phosphate cycle"/>
    <property type="evidence" value="ECO:0007669"/>
    <property type="project" value="UniProtKB-KW"/>
</dbReference>
<dbReference type="CDD" id="cd08212">
    <property type="entry name" value="RuBisCO_large_I"/>
    <property type="match status" value="1"/>
</dbReference>
<dbReference type="FunFam" id="3.20.20.110:FF:000001">
    <property type="entry name" value="Ribulose bisphosphate carboxylase large chain"/>
    <property type="match status" value="1"/>
</dbReference>
<dbReference type="FunFam" id="3.30.70.150:FF:000001">
    <property type="entry name" value="Ribulose bisphosphate carboxylase large chain"/>
    <property type="match status" value="1"/>
</dbReference>
<dbReference type="Gene3D" id="3.20.20.110">
    <property type="entry name" value="Ribulose bisphosphate carboxylase, large subunit, C-terminal domain"/>
    <property type="match status" value="1"/>
</dbReference>
<dbReference type="Gene3D" id="3.30.70.150">
    <property type="entry name" value="RuBisCO large subunit, N-terminal domain"/>
    <property type="match status" value="1"/>
</dbReference>
<dbReference type="HAMAP" id="MF_01338">
    <property type="entry name" value="RuBisCO_L_type1"/>
    <property type="match status" value="1"/>
</dbReference>
<dbReference type="InterPro" id="IPR033966">
    <property type="entry name" value="RuBisCO"/>
</dbReference>
<dbReference type="InterPro" id="IPR020878">
    <property type="entry name" value="RuBisCo_large_chain_AS"/>
</dbReference>
<dbReference type="InterPro" id="IPR000685">
    <property type="entry name" value="RuBisCO_lsu_C"/>
</dbReference>
<dbReference type="InterPro" id="IPR036376">
    <property type="entry name" value="RuBisCO_lsu_C_sf"/>
</dbReference>
<dbReference type="InterPro" id="IPR017443">
    <property type="entry name" value="RuBisCO_lsu_fd_N"/>
</dbReference>
<dbReference type="InterPro" id="IPR036422">
    <property type="entry name" value="RuBisCO_lsu_N_sf"/>
</dbReference>
<dbReference type="InterPro" id="IPR020888">
    <property type="entry name" value="RuBisCO_lsuI"/>
</dbReference>
<dbReference type="NCBIfam" id="NF003252">
    <property type="entry name" value="PRK04208.1"/>
    <property type="match status" value="1"/>
</dbReference>
<dbReference type="PANTHER" id="PTHR42704">
    <property type="entry name" value="RIBULOSE BISPHOSPHATE CARBOXYLASE"/>
    <property type="match status" value="1"/>
</dbReference>
<dbReference type="PANTHER" id="PTHR42704:SF15">
    <property type="entry name" value="RIBULOSE BISPHOSPHATE CARBOXYLASE LARGE CHAIN"/>
    <property type="match status" value="1"/>
</dbReference>
<dbReference type="Pfam" id="PF00016">
    <property type="entry name" value="RuBisCO_large"/>
    <property type="match status" value="1"/>
</dbReference>
<dbReference type="Pfam" id="PF02788">
    <property type="entry name" value="RuBisCO_large_N"/>
    <property type="match status" value="1"/>
</dbReference>
<dbReference type="SFLD" id="SFLDG01052">
    <property type="entry name" value="RuBisCO"/>
    <property type="match status" value="1"/>
</dbReference>
<dbReference type="SFLD" id="SFLDS00014">
    <property type="entry name" value="RuBisCO"/>
    <property type="match status" value="1"/>
</dbReference>
<dbReference type="SFLD" id="SFLDG00301">
    <property type="entry name" value="RuBisCO-like_proteins"/>
    <property type="match status" value="1"/>
</dbReference>
<dbReference type="SUPFAM" id="SSF51649">
    <property type="entry name" value="RuBisCo, C-terminal domain"/>
    <property type="match status" value="1"/>
</dbReference>
<dbReference type="SUPFAM" id="SSF54966">
    <property type="entry name" value="RuBisCO, large subunit, small (N-terminal) domain"/>
    <property type="match status" value="1"/>
</dbReference>
<dbReference type="PROSITE" id="PS00157">
    <property type="entry name" value="RUBISCO_LARGE"/>
    <property type="match status" value="1"/>
</dbReference>